<proteinExistence type="inferred from homology"/>
<name>YHHS_ECOL6</name>
<evidence type="ECO:0000255" key="1">
    <source>
        <dbReference type="HAMAP-Rule" id="MF_01118"/>
    </source>
</evidence>
<evidence type="ECO:0000305" key="2"/>
<protein>
    <recommendedName>
        <fullName evidence="1">Uncharacterized MFS-type transporter YhhS</fullName>
    </recommendedName>
</protein>
<accession>Q8FCN5</accession>
<organism>
    <name type="scientific">Escherichia coli O6:H1 (strain CFT073 / ATCC 700928 / UPEC)</name>
    <dbReference type="NCBI Taxonomy" id="199310"/>
    <lineage>
        <taxon>Bacteria</taxon>
        <taxon>Pseudomonadati</taxon>
        <taxon>Pseudomonadota</taxon>
        <taxon>Gammaproteobacteria</taxon>
        <taxon>Enterobacterales</taxon>
        <taxon>Enterobacteriaceae</taxon>
        <taxon>Escherichia</taxon>
    </lineage>
</organism>
<comment type="subcellular location">
    <subcellularLocation>
        <location evidence="1">Cell inner membrane</location>
        <topology evidence="1">Multi-pass membrane protein</topology>
    </subcellularLocation>
</comment>
<comment type="similarity">
    <text evidence="1">Belongs to the major facilitator superfamily. YhhS family.</text>
</comment>
<comment type="sequence caution" evidence="2">
    <conflict type="erroneous initiation">
        <sequence resource="EMBL-CDS" id="AAN82702"/>
    </conflict>
</comment>
<keyword id="KW-0997">Cell inner membrane</keyword>
<keyword id="KW-1003">Cell membrane</keyword>
<keyword id="KW-0472">Membrane</keyword>
<keyword id="KW-1185">Reference proteome</keyword>
<keyword id="KW-0812">Transmembrane</keyword>
<keyword id="KW-1133">Transmembrane helix</keyword>
<keyword id="KW-0813">Transport</keyword>
<sequence length="405" mass="42158">MPEPVAEPALNGLRLNLRIVSIVMFNFASYLTIGLPLAVLPGYVHDVMGFSAFWAGLVISLQYFATLLSRPHAGRYADLLGPKKIVVFGLCGCFLSGLGYLTAGLTASLPVISLLLLCLGRVILGIGQSFAGTGSTLWGVGVVGSLHIGRVISWNGIVTYGAMAMGAPLGVVFYHWGGLQALALIIMGVALVAILLAIPRPTVKASKGKPLPFRAVLGRVWLYGMALALASAGFGVIATFITLFYDAKGWDGAAFALTLFSCAFVGTRLLFPNGINRIGGLNVAMICFSVEIIGLLLVGVATMPWMAKIGVLLAGAGFSLVFPALGVVAVKAVPQQNQGAALATYTVFMDLSLGVTGPLAGLVMSWAGVPVIYLAAAGLVAIALLLTWRLKKRPPVEIPEAASSS</sequence>
<dbReference type="EMBL" id="AE014075">
    <property type="protein sequence ID" value="AAN82702.1"/>
    <property type="status" value="ALT_INIT"/>
    <property type="molecule type" value="Genomic_DNA"/>
</dbReference>
<dbReference type="SMR" id="Q8FCN5"/>
<dbReference type="STRING" id="199310.c4266"/>
<dbReference type="KEGG" id="ecc:c4266"/>
<dbReference type="eggNOG" id="COG0477">
    <property type="taxonomic scope" value="Bacteria"/>
</dbReference>
<dbReference type="HOGENOM" id="CLU_001265_10_3_6"/>
<dbReference type="Proteomes" id="UP000001410">
    <property type="component" value="Chromosome"/>
</dbReference>
<dbReference type="GO" id="GO:0005886">
    <property type="term" value="C:plasma membrane"/>
    <property type="evidence" value="ECO:0007669"/>
    <property type="project" value="UniProtKB-SubCell"/>
</dbReference>
<dbReference type="GO" id="GO:0022857">
    <property type="term" value="F:transmembrane transporter activity"/>
    <property type="evidence" value="ECO:0007669"/>
    <property type="project" value="UniProtKB-UniRule"/>
</dbReference>
<dbReference type="CDD" id="cd17489">
    <property type="entry name" value="MFS_YfcJ_like"/>
    <property type="match status" value="1"/>
</dbReference>
<dbReference type="FunFam" id="1.20.1250.20:FF:000155">
    <property type="entry name" value="Uncharacterized MFS-type transporter YhhS"/>
    <property type="match status" value="1"/>
</dbReference>
<dbReference type="Gene3D" id="1.20.1250.20">
    <property type="entry name" value="MFS general substrate transporter like domains"/>
    <property type="match status" value="1"/>
</dbReference>
<dbReference type="HAMAP" id="MF_01118">
    <property type="entry name" value="MFS_YhhS"/>
    <property type="match status" value="1"/>
</dbReference>
<dbReference type="InterPro" id="IPR011701">
    <property type="entry name" value="MFS"/>
</dbReference>
<dbReference type="InterPro" id="IPR020846">
    <property type="entry name" value="MFS_dom"/>
</dbReference>
<dbReference type="InterPro" id="IPR036259">
    <property type="entry name" value="MFS_trans_sf"/>
</dbReference>
<dbReference type="InterPro" id="IPR050171">
    <property type="entry name" value="MFS_Transporters"/>
</dbReference>
<dbReference type="InterPro" id="IPR023008">
    <property type="entry name" value="MFS_YhhS-like"/>
</dbReference>
<dbReference type="NCBIfam" id="NF003477">
    <property type="entry name" value="PRK05122.1"/>
    <property type="match status" value="1"/>
</dbReference>
<dbReference type="PANTHER" id="PTHR23517:SF13">
    <property type="entry name" value="MAJOR FACILITATOR SUPERFAMILY MFS_1"/>
    <property type="match status" value="1"/>
</dbReference>
<dbReference type="PANTHER" id="PTHR23517">
    <property type="entry name" value="RESISTANCE PROTEIN MDTM, PUTATIVE-RELATED-RELATED"/>
    <property type="match status" value="1"/>
</dbReference>
<dbReference type="Pfam" id="PF07690">
    <property type="entry name" value="MFS_1"/>
    <property type="match status" value="1"/>
</dbReference>
<dbReference type="SUPFAM" id="SSF103473">
    <property type="entry name" value="MFS general substrate transporter"/>
    <property type="match status" value="1"/>
</dbReference>
<dbReference type="PROSITE" id="PS50850">
    <property type="entry name" value="MFS"/>
    <property type="match status" value="1"/>
</dbReference>
<reference key="1">
    <citation type="journal article" date="2002" name="Proc. Natl. Acad. Sci. U.S.A.">
        <title>Extensive mosaic structure revealed by the complete genome sequence of uropathogenic Escherichia coli.</title>
        <authorList>
            <person name="Welch R.A."/>
            <person name="Burland V."/>
            <person name="Plunkett G. III"/>
            <person name="Redford P."/>
            <person name="Roesch P."/>
            <person name="Rasko D."/>
            <person name="Buckles E.L."/>
            <person name="Liou S.-R."/>
            <person name="Boutin A."/>
            <person name="Hackett J."/>
            <person name="Stroud D."/>
            <person name="Mayhew G.F."/>
            <person name="Rose D.J."/>
            <person name="Zhou S."/>
            <person name="Schwartz D.C."/>
            <person name="Perna N.T."/>
            <person name="Mobley H.L.T."/>
            <person name="Donnenberg M.S."/>
            <person name="Blattner F.R."/>
        </authorList>
    </citation>
    <scope>NUCLEOTIDE SEQUENCE [LARGE SCALE GENOMIC DNA]</scope>
    <source>
        <strain>CFT073 / ATCC 700928 / UPEC</strain>
    </source>
</reference>
<gene>
    <name type="primary">yhhS</name>
    <name type="ordered locus">c4266</name>
</gene>
<feature type="chain" id="PRO_0000087808" description="Uncharacterized MFS-type transporter YhhS">
    <location>
        <begin position="1"/>
        <end position="405"/>
    </location>
</feature>
<feature type="transmembrane region" description="Helical" evidence="1">
    <location>
        <begin position="19"/>
        <end position="39"/>
    </location>
</feature>
<feature type="transmembrane region" description="Helical" evidence="1">
    <location>
        <begin position="47"/>
        <end position="67"/>
    </location>
</feature>
<feature type="transmembrane region" description="Helical" evidence="1">
    <location>
        <begin position="85"/>
        <end position="105"/>
    </location>
</feature>
<feature type="transmembrane region" description="Helical" evidence="1">
    <location>
        <begin position="107"/>
        <end position="127"/>
    </location>
</feature>
<feature type="transmembrane region" description="Helical" evidence="1">
    <location>
        <begin position="156"/>
        <end position="176"/>
    </location>
</feature>
<feature type="transmembrane region" description="Helical" evidence="1">
    <location>
        <begin position="178"/>
        <end position="198"/>
    </location>
</feature>
<feature type="transmembrane region" description="Helical" evidence="1">
    <location>
        <begin position="224"/>
        <end position="244"/>
    </location>
</feature>
<feature type="transmembrane region" description="Helical" evidence="1">
    <location>
        <begin position="252"/>
        <end position="272"/>
    </location>
</feature>
<feature type="transmembrane region" description="Helical" evidence="1">
    <location>
        <begin position="283"/>
        <end position="303"/>
    </location>
</feature>
<feature type="transmembrane region" description="Helical" evidence="1">
    <location>
        <begin position="309"/>
        <end position="329"/>
    </location>
</feature>
<feature type="transmembrane region" description="Helical" evidence="1">
    <location>
        <begin position="344"/>
        <end position="364"/>
    </location>
</feature>
<feature type="transmembrane region" description="Helical" evidence="1">
    <location>
        <begin position="366"/>
        <end position="386"/>
    </location>
</feature>